<name>CENPA_CRIGR</name>
<proteinExistence type="evidence at transcript level"/>
<comment type="function">
    <text evidence="2">Histone H3-like nucleosomal protein that is specifically found in centromeric nucleosomes. Replaces conventional H3 in the nucleosome core of centromeric chromatin that serves as an assembly site for the inner kinetochore. The presence of CENPA subtly modifies the nucleosome structure and the way DNA is wrapped around the nucleosome and gives rise to protruding DNA ends that are less well-ordered and rigid compared to nucleosomes containing histone H3. May serve as an epigenetic mark that propagates centromere identity through replication and cell division. Required for recruitment and assembly of kinetochore proteins, and as a consequence required for progress through mitosis, chromosome segregation and cytokinesis.</text>
</comment>
<comment type="subunit">
    <text evidence="2">Component of centromeric nucleosomes, where DNA is wrapped around a histone octamer core. The octamer contains two molecules each of H2A, H2B, CENPA and H4 assembled in one CENPA-H4 heterotetramer and two H2A-H2B heterodimers. CENPA modulates the DNA-binding characteristics of nucleosomes so that protruding DNA ends have higher flexibility than in nucleosomes containing conventional histone H3. Inhibits binding of histone H1 to nucleosomes, since histone H1 binds preferentially to rigid DNA linkers that protrude from nucleosomes. Nucleosomes containing CENPA also contain histone H2A variants such as MACROH2A and H2A.Z/H2AZ1. The CENPA-H4 heterotetramer is more compact and structurally more rigid than corresponding H3-H4 heterotetramers. Can assemble into nucleosomes that contain both CENPA and histone H3.3; these nucleosomes interact with a single CENPC chain. Heterotrimer composed of HJURP, CENPA and histone H4, where HJURP interacts with the dimer formed by CENPA and histone H4 and prevents tetramerization of CENPA and H4. Component of the CENPA-NAC complex, at least composed of CENPA, CENPC, CENPH, CENPM, CENPN, CENPT and CENPU. Interacts (via CATD domain) with HJURP; the interaction is direct and is required for its localization to centromeres. Interacts with CENPC, CENPN and CENPT; interaction is direct. Part of a centromere complex consisting of CENPA, CENPT and CENPW. Identified in centromere complexes containing histones H2A, H2B and H4, and at least CENPA, CENPB, CENPC, CENPT, CENPN, HJURP, SUPT16H, SSRP1 and RSF1. Can self-associate. The CENPA-H4 heterotetramer can bind DNA by itself (in vitro). Interacts with CDK1, PPP1CA and RBBP7.</text>
</comment>
<comment type="subcellular location">
    <subcellularLocation>
        <location evidence="2">Nucleus</location>
    </subcellularLocation>
    <subcellularLocation>
        <location evidence="2">Chromosome</location>
        <location evidence="2">Centromere</location>
    </subcellularLocation>
    <text evidence="2">Localizes exclusively to sites of kinetochore assembly in centromeres. Occupies a compact domain at the inner kinetochore plate stretching across 2 thirds of the length of the constriction but encompassing only one third of the constriction width and height. Phosphorylation at Ser-57 during early mitosis abolishes association with chromatin and centromeres and results in dispersed nuclear location.</text>
</comment>
<comment type="domain">
    <text evidence="2">The CATD (CENPA targeting domain) region is responsible for the more compact structure of nucleosomes containing CENPA. It is necessary and sufficient to mediate the localization into centromeres.</text>
</comment>
<comment type="PTM">
    <text evidence="2">Trimethylated by NTMT1 at the N-terminal glycine after cleavage of Met-1. Methylation is low before incorporation into nucleosomes and increases with cell cycle progression, with the highest levels in mitotic nucleosomes.</text>
</comment>
<comment type="PTM">
    <text evidence="2">Phosphorylated by CDK1 at Ser-57 during early mitosis; this abolishes association with chromatin and centromeres, prevents interaction with HJURP and thereby prevents premature assembly of CENPA into centromeres. Dephosphorylated at Ser-57 by PPP1CA during late mitosis.</text>
</comment>
<comment type="PTM">
    <text evidence="1">Poly-ADP-ribosylated by PARP1.</text>
</comment>
<comment type="similarity">
    <text evidence="4">Belongs to the histone H3 family.</text>
</comment>
<organism>
    <name type="scientific">Cricetulus griseus</name>
    <name type="common">Chinese hamster</name>
    <name type="synonym">Cricetulus barabensis griseus</name>
    <dbReference type="NCBI Taxonomy" id="10029"/>
    <lineage>
        <taxon>Eukaryota</taxon>
        <taxon>Metazoa</taxon>
        <taxon>Chordata</taxon>
        <taxon>Craniata</taxon>
        <taxon>Vertebrata</taxon>
        <taxon>Euteleostomi</taxon>
        <taxon>Mammalia</taxon>
        <taxon>Eutheria</taxon>
        <taxon>Euarchontoglires</taxon>
        <taxon>Glires</taxon>
        <taxon>Rodentia</taxon>
        <taxon>Myomorpha</taxon>
        <taxon>Muroidea</taxon>
        <taxon>Cricetidae</taxon>
        <taxon>Cricetinae</taxon>
        <taxon>Cricetulus</taxon>
    </lineage>
</organism>
<protein>
    <recommendedName>
        <fullName>Histone H3-like centromeric protein A</fullName>
    </recommendedName>
    <alternativeName>
        <fullName>Centromere protein A</fullName>
        <shortName>CENP-A</shortName>
    </alternativeName>
</protein>
<evidence type="ECO:0000250" key="1">
    <source>
        <dbReference type="UniProtKB" id="O35216"/>
    </source>
</evidence>
<evidence type="ECO:0000250" key="2">
    <source>
        <dbReference type="UniProtKB" id="P49450"/>
    </source>
</evidence>
<evidence type="ECO:0000256" key="3">
    <source>
        <dbReference type="SAM" id="MobiDB-lite"/>
    </source>
</evidence>
<evidence type="ECO:0000305" key="4"/>
<feature type="initiator methionine" description="Removed" evidence="2">
    <location>
        <position position="1"/>
    </location>
</feature>
<feature type="chain" id="PRO_0000249467" description="Histone H3-like centromeric protein A">
    <location>
        <begin position="2"/>
        <end position="129"/>
    </location>
</feature>
<feature type="region of interest" description="Disordered" evidence="3">
    <location>
        <begin position="1"/>
        <end position="30"/>
    </location>
</feature>
<feature type="region of interest" description="H3-like">
    <location>
        <begin position="30"/>
        <end position="129"/>
    </location>
</feature>
<feature type="region of interest" description="CATD">
    <location>
        <begin position="64"/>
        <end position="105"/>
    </location>
</feature>
<feature type="compositionally biased region" description="Basic residues" evidence="3">
    <location>
        <begin position="1"/>
        <end position="14"/>
    </location>
</feature>
<feature type="modified residue" description="N,N,N-trimethylglycine" evidence="2">
    <location>
        <position position="2"/>
    </location>
</feature>
<feature type="modified residue" description="Phosphoserine" evidence="2">
    <location>
        <position position="16"/>
    </location>
</feature>
<feature type="modified residue" description="Phosphoserine" evidence="2">
    <location>
        <position position="22"/>
    </location>
</feature>
<feature type="modified residue" description="Phosphoserine" evidence="2">
    <location>
        <position position="57"/>
    </location>
</feature>
<sequence>MGPRRKPRTPRRRPSSPVPGPSRRSSRPGKRRKFLWLKEIKKLQRSTDLLLRKLPFSRVVREICGKFTRGVDLCWQAQALLALQEAAEAFLVHLFEDAYLLTLHAGRVTIFPKDIQLTRRIRGIEGGLG</sequence>
<dbReference type="EMBL" id="AJ428867">
    <property type="protein sequence ID" value="CAD21829.1"/>
    <property type="molecule type" value="mRNA"/>
</dbReference>
<dbReference type="RefSeq" id="NP_001233646.1">
    <property type="nucleotide sequence ID" value="NM_001246717.1"/>
</dbReference>
<dbReference type="RefSeq" id="XP_007653168.1">
    <property type="nucleotide sequence ID" value="XM_007654978.2"/>
</dbReference>
<dbReference type="SMR" id="Q8R565"/>
<dbReference type="PaxDb" id="10029-NP_001233646.1"/>
<dbReference type="Ensembl" id="ENSCGRT00001020934.1">
    <property type="protein sequence ID" value="ENSCGRP00001016690.1"/>
    <property type="gene ID" value="ENSCGRG00001016945.1"/>
</dbReference>
<dbReference type="GeneID" id="100689459"/>
<dbReference type="KEGG" id="cge:100689459"/>
<dbReference type="CTD" id="1058"/>
<dbReference type="eggNOG" id="KOG1745">
    <property type="taxonomic scope" value="Eukaryota"/>
</dbReference>
<dbReference type="GeneTree" id="ENSGT01130000278322"/>
<dbReference type="OMA" id="REICITF"/>
<dbReference type="OrthoDB" id="842664at2759"/>
<dbReference type="Proteomes" id="UP000694386">
    <property type="component" value="Unplaced"/>
</dbReference>
<dbReference type="Proteomes" id="UP001108280">
    <property type="component" value="Chromosome 7"/>
</dbReference>
<dbReference type="GO" id="GO:0043505">
    <property type="term" value="C:CENP-A containing nucleosome"/>
    <property type="evidence" value="ECO:0007669"/>
    <property type="project" value="Ensembl"/>
</dbReference>
<dbReference type="GO" id="GO:0000779">
    <property type="term" value="C:condensed chromosome, centromeric region"/>
    <property type="evidence" value="ECO:0007669"/>
    <property type="project" value="Ensembl"/>
</dbReference>
<dbReference type="GO" id="GO:0005654">
    <property type="term" value="C:nucleoplasm"/>
    <property type="evidence" value="ECO:0007669"/>
    <property type="project" value="Ensembl"/>
</dbReference>
<dbReference type="GO" id="GO:0005721">
    <property type="term" value="C:pericentric heterochromatin"/>
    <property type="evidence" value="ECO:0007669"/>
    <property type="project" value="Ensembl"/>
</dbReference>
<dbReference type="GO" id="GO:0003677">
    <property type="term" value="F:DNA binding"/>
    <property type="evidence" value="ECO:0007669"/>
    <property type="project" value="UniProtKB-KW"/>
</dbReference>
<dbReference type="GO" id="GO:0046982">
    <property type="term" value="F:protein heterodimerization activity"/>
    <property type="evidence" value="ECO:0007669"/>
    <property type="project" value="InterPro"/>
</dbReference>
<dbReference type="GO" id="GO:0030527">
    <property type="term" value="F:structural constituent of chromatin"/>
    <property type="evidence" value="ECO:0007669"/>
    <property type="project" value="InterPro"/>
</dbReference>
<dbReference type="GO" id="GO:0034080">
    <property type="term" value="P:CENP-A containing chromatin assembly"/>
    <property type="evidence" value="ECO:0007669"/>
    <property type="project" value="Ensembl"/>
</dbReference>
<dbReference type="GO" id="GO:0000132">
    <property type="term" value="P:establishment of mitotic spindle orientation"/>
    <property type="evidence" value="ECO:0007669"/>
    <property type="project" value="Ensembl"/>
</dbReference>
<dbReference type="GO" id="GO:0051382">
    <property type="term" value="P:kinetochore assembly"/>
    <property type="evidence" value="ECO:0007669"/>
    <property type="project" value="Ensembl"/>
</dbReference>
<dbReference type="GO" id="GO:0000281">
    <property type="term" value="P:mitotic cytokinesis"/>
    <property type="evidence" value="ECO:0007669"/>
    <property type="project" value="Ensembl"/>
</dbReference>
<dbReference type="GO" id="GO:0071459">
    <property type="term" value="P:protein localization to chromosome, centromeric region"/>
    <property type="evidence" value="ECO:0007669"/>
    <property type="project" value="Ensembl"/>
</dbReference>
<dbReference type="CDD" id="cd22911">
    <property type="entry name" value="HFD_H3"/>
    <property type="match status" value="1"/>
</dbReference>
<dbReference type="FunFam" id="1.10.20.10:FF:000065">
    <property type="entry name" value="Histone H3-like centromeric protein A"/>
    <property type="match status" value="1"/>
</dbReference>
<dbReference type="Gene3D" id="1.10.20.10">
    <property type="entry name" value="Histone, subunit A"/>
    <property type="match status" value="1"/>
</dbReference>
<dbReference type="InterPro" id="IPR009072">
    <property type="entry name" value="Histone-fold"/>
</dbReference>
<dbReference type="InterPro" id="IPR007125">
    <property type="entry name" value="Histone_H2A/H2B/H3"/>
</dbReference>
<dbReference type="InterPro" id="IPR000164">
    <property type="entry name" value="Histone_H3/CENP-A"/>
</dbReference>
<dbReference type="PANTHER" id="PTHR45810:SF14">
    <property type="entry name" value="CENTROMERE PROTEIN A"/>
    <property type="match status" value="1"/>
</dbReference>
<dbReference type="PANTHER" id="PTHR45810">
    <property type="entry name" value="HISTONE H3.2"/>
    <property type="match status" value="1"/>
</dbReference>
<dbReference type="Pfam" id="PF00125">
    <property type="entry name" value="Histone"/>
    <property type="match status" value="1"/>
</dbReference>
<dbReference type="PRINTS" id="PR00622">
    <property type="entry name" value="HISTONEH3"/>
</dbReference>
<dbReference type="SMART" id="SM00428">
    <property type="entry name" value="H3"/>
    <property type="match status" value="1"/>
</dbReference>
<dbReference type="SUPFAM" id="SSF47113">
    <property type="entry name" value="Histone-fold"/>
    <property type="match status" value="1"/>
</dbReference>
<gene>
    <name type="primary">CENPA</name>
</gene>
<accession>Q8R565</accession>
<keyword id="KW-0013">ADP-ribosylation</keyword>
<keyword id="KW-0137">Centromere</keyword>
<keyword id="KW-0158">Chromosome</keyword>
<keyword id="KW-0238">DNA-binding</keyword>
<keyword id="KW-0488">Methylation</keyword>
<keyword id="KW-0544">Nucleosome core</keyword>
<keyword id="KW-0539">Nucleus</keyword>
<keyword id="KW-0597">Phosphoprotein</keyword>
<reference key="1">
    <citation type="journal article" date="2002" name="BMC Genomics">
        <title>Molecular cloning and sequence analysis of hamster CENP-A cDNA.</title>
        <authorList>
            <person name="Figueroa J."/>
            <person name="Pendon C."/>
            <person name="Valdivia M.M."/>
        </authorList>
    </citation>
    <scope>NUCLEOTIDE SEQUENCE [MRNA]</scope>
    <source>
        <tissue>Ovary</tissue>
    </source>
</reference>